<comment type="subcellular location">
    <subcellularLocation>
        <location evidence="1">Cytoplasm</location>
    </subcellularLocation>
</comment>
<comment type="similarity">
    <text evidence="1">Belongs to the TACO1 family.</text>
</comment>
<name>Y372_EHRRG</name>
<gene>
    <name type="ordered locus">ERGA_CDS_03720</name>
</gene>
<accession>Q5FHN8</accession>
<sequence>MAGHSQFANIKHRKGAQDAKRAQKFTKLIREIIVATKQGLPDPEFNSRLRSAIITAKKENLPKDRIDAAIKTASGNNQHDNFEEVVYEGYGPGNIALIIQTLTNNRNRTAAELRHALSKYNGKLGESGSVSFLFNHVGLIAYKASSINSFDTLFNTAIELQALDVEENDYDEEKMYYVTCNIQDFGNVRDQLFKKFSDAEFSRLFWKPINITTIDDEELQKRILNLMDVLENNDDVQHVDSNFIFNTKI</sequence>
<proteinExistence type="inferred from homology"/>
<keyword id="KW-0963">Cytoplasm</keyword>
<keyword id="KW-0238">DNA-binding</keyword>
<keyword id="KW-0804">Transcription</keyword>
<keyword id="KW-0805">Transcription regulation</keyword>
<feature type="chain" id="PRO_0000175806" description="Probable transcriptional regulatory protein ERGA_CDS_03720">
    <location>
        <begin position="1"/>
        <end position="249"/>
    </location>
</feature>
<feature type="region of interest" description="Disordered" evidence="2">
    <location>
        <begin position="1"/>
        <end position="21"/>
    </location>
</feature>
<evidence type="ECO:0000255" key="1">
    <source>
        <dbReference type="HAMAP-Rule" id="MF_00693"/>
    </source>
</evidence>
<evidence type="ECO:0000256" key="2">
    <source>
        <dbReference type="SAM" id="MobiDB-lite"/>
    </source>
</evidence>
<protein>
    <recommendedName>
        <fullName evidence="1">Probable transcriptional regulatory protein ERGA_CDS_03720</fullName>
    </recommendedName>
</protein>
<organism>
    <name type="scientific">Ehrlichia ruminantium (strain Gardel)</name>
    <dbReference type="NCBI Taxonomy" id="302409"/>
    <lineage>
        <taxon>Bacteria</taxon>
        <taxon>Pseudomonadati</taxon>
        <taxon>Pseudomonadota</taxon>
        <taxon>Alphaproteobacteria</taxon>
        <taxon>Rickettsiales</taxon>
        <taxon>Anaplasmataceae</taxon>
        <taxon>Ehrlichia</taxon>
    </lineage>
</organism>
<reference key="1">
    <citation type="journal article" date="2006" name="J. Bacteriol.">
        <title>Comparative genomic analysis of three strains of Ehrlichia ruminantium reveals an active process of genome size plasticity.</title>
        <authorList>
            <person name="Frutos R."/>
            <person name="Viari A."/>
            <person name="Ferraz C."/>
            <person name="Morgat A."/>
            <person name="Eychenie S."/>
            <person name="Kandassamy Y."/>
            <person name="Chantal I."/>
            <person name="Bensaid A."/>
            <person name="Coissac E."/>
            <person name="Vachiery N."/>
            <person name="Demaille J."/>
            <person name="Martinez D."/>
        </authorList>
    </citation>
    <scope>NUCLEOTIDE SEQUENCE [LARGE SCALE GENOMIC DNA]</scope>
    <source>
        <strain>Gardel</strain>
    </source>
</reference>
<dbReference type="EMBL" id="CR925677">
    <property type="protein sequence ID" value="CAI27824.1"/>
    <property type="molecule type" value="Genomic_DNA"/>
</dbReference>
<dbReference type="RefSeq" id="WP_011155047.1">
    <property type="nucleotide sequence ID" value="NC_006831.1"/>
</dbReference>
<dbReference type="SMR" id="Q5FHN8"/>
<dbReference type="KEGG" id="erg:ERGA_CDS_03720"/>
<dbReference type="HOGENOM" id="CLU_062974_2_2_5"/>
<dbReference type="OrthoDB" id="9781053at2"/>
<dbReference type="Proteomes" id="UP000000533">
    <property type="component" value="Chromosome"/>
</dbReference>
<dbReference type="GO" id="GO:0005737">
    <property type="term" value="C:cytoplasm"/>
    <property type="evidence" value="ECO:0007669"/>
    <property type="project" value="UniProtKB-SubCell"/>
</dbReference>
<dbReference type="GO" id="GO:0003677">
    <property type="term" value="F:DNA binding"/>
    <property type="evidence" value="ECO:0007669"/>
    <property type="project" value="UniProtKB-UniRule"/>
</dbReference>
<dbReference type="GO" id="GO:0006355">
    <property type="term" value="P:regulation of DNA-templated transcription"/>
    <property type="evidence" value="ECO:0007669"/>
    <property type="project" value="UniProtKB-UniRule"/>
</dbReference>
<dbReference type="FunFam" id="1.10.10.200:FF:000002">
    <property type="entry name" value="Probable transcriptional regulatory protein CLM62_37755"/>
    <property type="match status" value="1"/>
</dbReference>
<dbReference type="Gene3D" id="1.10.10.200">
    <property type="match status" value="1"/>
</dbReference>
<dbReference type="Gene3D" id="3.30.70.980">
    <property type="match status" value="2"/>
</dbReference>
<dbReference type="HAMAP" id="MF_00693">
    <property type="entry name" value="Transcrip_reg_TACO1"/>
    <property type="match status" value="1"/>
</dbReference>
<dbReference type="InterPro" id="IPR017856">
    <property type="entry name" value="Integrase-like_N"/>
</dbReference>
<dbReference type="InterPro" id="IPR048300">
    <property type="entry name" value="TACO1_YebC-like_2nd/3rd_dom"/>
</dbReference>
<dbReference type="InterPro" id="IPR049083">
    <property type="entry name" value="TACO1_YebC_N"/>
</dbReference>
<dbReference type="InterPro" id="IPR002876">
    <property type="entry name" value="Transcrip_reg_TACO1-like"/>
</dbReference>
<dbReference type="InterPro" id="IPR026564">
    <property type="entry name" value="Transcrip_reg_TACO1-like_dom3"/>
</dbReference>
<dbReference type="InterPro" id="IPR029072">
    <property type="entry name" value="YebC-like"/>
</dbReference>
<dbReference type="NCBIfam" id="NF001030">
    <property type="entry name" value="PRK00110.1"/>
    <property type="match status" value="1"/>
</dbReference>
<dbReference type="NCBIfam" id="NF009044">
    <property type="entry name" value="PRK12378.1"/>
    <property type="match status" value="1"/>
</dbReference>
<dbReference type="NCBIfam" id="TIGR01033">
    <property type="entry name" value="YebC/PmpR family DNA-binding transcriptional regulator"/>
    <property type="match status" value="1"/>
</dbReference>
<dbReference type="PANTHER" id="PTHR12532:SF11">
    <property type="match status" value="1"/>
</dbReference>
<dbReference type="PANTHER" id="PTHR12532">
    <property type="entry name" value="TRANSLATIONAL ACTIVATOR OF CYTOCHROME C OXIDASE 1"/>
    <property type="match status" value="1"/>
</dbReference>
<dbReference type="Pfam" id="PF20772">
    <property type="entry name" value="TACO1_YebC_N"/>
    <property type="match status" value="1"/>
</dbReference>
<dbReference type="Pfam" id="PF01709">
    <property type="entry name" value="Transcrip_reg"/>
    <property type="match status" value="1"/>
</dbReference>
<dbReference type="SUPFAM" id="SSF75625">
    <property type="entry name" value="YebC-like"/>
    <property type="match status" value="1"/>
</dbReference>